<name>CCA_XYLFA</name>
<comment type="function">
    <text evidence="1">Catalyzes the addition and repair of the essential 3'-terminal CCA sequence in tRNAs without using a nucleic acid template. Adds these three nucleotides in the order of C, C, and A to the tRNA nucleotide-73, using CTP and ATP as substrates and producing inorganic pyrophosphate. tRNA 3'-terminal CCA addition is required both for tRNA processing and repair. Also involved in tRNA surveillance by mediating tandem CCA addition to generate a CCACCA at the 3' terminus of unstable tRNAs. While stable tRNAs receive only 3'-terminal CCA, unstable tRNAs are marked with CCACCA and rapidly degraded.</text>
</comment>
<comment type="catalytic activity">
    <reaction evidence="1">
        <text>a tRNA precursor + 2 CTP + ATP = a tRNA with a 3' CCA end + 3 diphosphate</text>
        <dbReference type="Rhea" id="RHEA:14433"/>
        <dbReference type="Rhea" id="RHEA-COMP:10465"/>
        <dbReference type="Rhea" id="RHEA-COMP:10468"/>
        <dbReference type="ChEBI" id="CHEBI:30616"/>
        <dbReference type="ChEBI" id="CHEBI:33019"/>
        <dbReference type="ChEBI" id="CHEBI:37563"/>
        <dbReference type="ChEBI" id="CHEBI:74896"/>
        <dbReference type="ChEBI" id="CHEBI:83071"/>
        <dbReference type="EC" id="2.7.7.72"/>
    </reaction>
</comment>
<comment type="catalytic activity">
    <reaction evidence="1">
        <text>a tRNA with a 3' CCA end + 2 CTP + ATP = a tRNA with a 3' CCACCA end + 3 diphosphate</text>
        <dbReference type="Rhea" id="RHEA:76235"/>
        <dbReference type="Rhea" id="RHEA-COMP:10468"/>
        <dbReference type="Rhea" id="RHEA-COMP:18655"/>
        <dbReference type="ChEBI" id="CHEBI:30616"/>
        <dbReference type="ChEBI" id="CHEBI:33019"/>
        <dbReference type="ChEBI" id="CHEBI:37563"/>
        <dbReference type="ChEBI" id="CHEBI:83071"/>
        <dbReference type="ChEBI" id="CHEBI:195187"/>
    </reaction>
    <physiologicalReaction direction="left-to-right" evidence="1">
        <dbReference type="Rhea" id="RHEA:76236"/>
    </physiologicalReaction>
</comment>
<comment type="cofactor">
    <cofactor evidence="1">
        <name>Mg(2+)</name>
        <dbReference type="ChEBI" id="CHEBI:18420"/>
    </cofactor>
    <text evidence="1">Magnesium is required for nucleotidyltransferase activity.</text>
</comment>
<comment type="cofactor">
    <cofactor evidence="1">
        <name>Ni(2+)</name>
        <dbReference type="ChEBI" id="CHEBI:49786"/>
    </cofactor>
    <text evidence="1">Nickel for phosphatase activity.</text>
</comment>
<comment type="subunit">
    <text evidence="1">Monomer. Can also form homodimers and oligomers.</text>
</comment>
<comment type="domain">
    <text evidence="1">Comprises two domains: an N-terminal domain containing the nucleotidyltransferase activity and a C-terminal HD domain associated with both phosphodiesterase and phosphatase activities.</text>
</comment>
<comment type="miscellaneous">
    <text evidence="1">A single active site specifically recognizes both ATP and CTP and is responsible for their addition.</text>
</comment>
<comment type="similarity">
    <text evidence="1">Belongs to the tRNA nucleotidyltransferase/poly(A) polymerase family. Bacterial CCA-adding enzyme type 1 subfamily.</text>
</comment>
<keyword id="KW-0067">ATP-binding</keyword>
<keyword id="KW-0378">Hydrolase</keyword>
<keyword id="KW-0460">Magnesium</keyword>
<keyword id="KW-0479">Metal-binding</keyword>
<keyword id="KW-0511">Multifunctional enzyme</keyword>
<keyword id="KW-0533">Nickel</keyword>
<keyword id="KW-0547">Nucleotide-binding</keyword>
<keyword id="KW-0548">Nucleotidyltransferase</keyword>
<keyword id="KW-0692">RNA repair</keyword>
<keyword id="KW-0694">RNA-binding</keyword>
<keyword id="KW-0808">Transferase</keyword>
<keyword id="KW-0819">tRNA processing</keyword>
<organism>
    <name type="scientific">Xylella fastidiosa (strain 9a5c)</name>
    <dbReference type="NCBI Taxonomy" id="160492"/>
    <lineage>
        <taxon>Bacteria</taxon>
        <taxon>Pseudomonadati</taxon>
        <taxon>Pseudomonadota</taxon>
        <taxon>Gammaproteobacteria</taxon>
        <taxon>Lysobacterales</taxon>
        <taxon>Lysobacteraceae</taxon>
        <taxon>Xylella</taxon>
    </lineage>
</organism>
<protein>
    <recommendedName>
        <fullName evidence="1">Multifunctional CCA protein</fullName>
    </recommendedName>
    <domain>
        <recommendedName>
            <fullName evidence="1">CCA-adding enzyme</fullName>
            <ecNumber evidence="1">2.7.7.72</ecNumber>
        </recommendedName>
        <alternativeName>
            <fullName evidence="1">CCA tRNA nucleotidyltransferase</fullName>
        </alternativeName>
        <alternativeName>
            <fullName evidence="1">tRNA CCA-pyrophosphorylase</fullName>
        </alternativeName>
        <alternativeName>
            <fullName evidence="1">tRNA adenylyl-/cytidylyl-transferase</fullName>
        </alternativeName>
        <alternativeName>
            <fullName evidence="1">tRNA nucleotidyltransferase</fullName>
        </alternativeName>
        <alternativeName>
            <fullName evidence="1">tRNA-NT</fullName>
        </alternativeName>
    </domain>
    <domain>
        <recommendedName>
            <fullName evidence="1">2'-nucleotidase</fullName>
            <ecNumber evidence="1">3.1.3.-</ecNumber>
        </recommendedName>
    </domain>
    <domain>
        <recommendedName>
            <fullName evidence="1">2',3'-cyclic phosphodiesterase</fullName>
            <ecNumber evidence="1">3.1.4.-</ecNumber>
        </recommendedName>
    </domain>
    <domain>
        <recommendedName>
            <fullName evidence="1">Phosphatase</fullName>
            <ecNumber evidence="1">3.1.3.-</ecNumber>
        </recommendedName>
    </domain>
</protein>
<sequence length="416" mass="46363">MKSYLVGGAVRDALLGQPAGDCDWVVVGADPAHMESLGFKAVGRDFPVFLHPKTGEEFALARTERKNGHGYRGFIVNADPTVTLEQDLQRRDFTINAIAHDQTNDTLIDPYGGVNDLEQRILRHISPAFAEDPLRVLRAARFMARLAPLGFSIAPETLTMMREMAASGELNSLIPERIWKELSRSLAYTQPAAFLHTLRTVNALEVVLPELNALYGVPQHADYHPEIDTGLHQELVSDMAAKLAPGDMLIGFAALCHDLGKALTPRATWPHHPMHEQRGMAPTQQLSERLKVPRDYQQLALIACREHLNVHRLSKLHDHTVYELLQRCDAFRRPERIAQLAIVCEADYRGRYGHEDANYPQGQHLCRLHAAALAVNARDLNRQDLHGTQIGEALAQARIRAISSTGVYDGGTRTNF</sequence>
<accession>Q9PDL7</accession>
<gene>
    <name evidence="1" type="primary">cca</name>
    <name type="ordered locus">XF_1362</name>
</gene>
<proteinExistence type="inferred from homology"/>
<reference key="1">
    <citation type="journal article" date="2000" name="Nature">
        <title>The genome sequence of the plant pathogen Xylella fastidiosa.</title>
        <authorList>
            <person name="Simpson A.J.G."/>
            <person name="Reinach F.C."/>
            <person name="Arruda P."/>
            <person name="Abreu F.A."/>
            <person name="Acencio M."/>
            <person name="Alvarenga R."/>
            <person name="Alves L.M.C."/>
            <person name="Araya J.E."/>
            <person name="Baia G.S."/>
            <person name="Baptista C.S."/>
            <person name="Barros M.H."/>
            <person name="Bonaccorsi E.D."/>
            <person name="Bordin S."/>
            <person name="Bove J.M."/>
            <person name="Briones M.R.S."/>
            <person name="Bueno M.R.P."/>
            <person name="Camargo A.A."/>
            <person name="Camargo L.E.A."/>
            <person name="Carraro D.M."/>
            <person name="Carrer H."/>
            <person name="Colauto N.B."/>
            <person name="Colombo C."/>
            <person name="Costa F.F."/>
            <person name="Costa M.C.R."/>
            <person name="Costa-Neto C.M."/>
            <person name="Coutinho L.L."/>
            <person name="Cristofani M."/>
            <person name="Dias-Neto E."/>
            <person name="Docena C."/>
            <person name="El-Dorry H."/>
            <person name="Facincani A.P."/>
            <person name="Ferreira A.J.S."/>
            <person name="Ferreira V.C.A."/>
            <person name="Ferro J.A."/>
            <person name="Fraga J.S."/>
            <person name="Franca S.C."/>
            <person name="Franco M.C."/>
            <person name="Frohme M."/>
            <person name="Furlan L.R."/>
            <person name="Garnier M."/>
            <person name="Goldman G.H."/>
            <person name="Goldman M.H.S."/>
            <person name="Gomes S.L."/>
            <person name="Gruber A."/>
            <person name="Ho P.L."/>
            <person name="Hoheisel J.D."/>
            <person name="Junqueira M.L."/>
            <person name="Kemper E.L."/>
            <person name="Kitajima J.P."/>
            <person name="Krieger J.E."/>
            <person name="Kuramae E.E."/>
            <person name="Laigret F."/>
            <person name="Lambais M.R."/>
            <person name="Leite L.C.C."/>
            <person name="Lemos E.G.M."/>
            <person name="Lemos M.V.F."/>
            <person name="Lopes S.A."/>
            <person name="Lopes C.R."/>
            <person name="Machado J.A."/>
            <person name="Machado M.A."/>
            <person name="Madeira A.M.B.N."/>
            <person name="Madeira H.M.F."/>
            <person name="Marino C.L."/>
            <person name="Marques M.V."/>
            <person name="Martins E.A.L."/>
            <person name="Martins E.M.F."/>
            <person name="Matsukuma A.Y."/>
            <person name="Menck C.F.M."/>
            <person name="Miracca E.C."/>
            <person name="Miyaki C.Y."/>
            <person name="Monteiro-Vitorello C.B."/>
            <person name="Moon D.H."/>
            <person name="Nagai M.A."/>
            <person name="Nascimento A.L.T.O."/>
            <person name="Netto L.E.S."/>
            <person name="Nhani A. Jr."/>
            <person name="Nobrega F.G."/>
            <person name="Nunes L.R."/>
            <person name="Oliveira M.A."/>
            <person name="de Oliveira M.C."/>
            <person name="de Oliveira R.C."/>
            <person name="Palmieri D.A."/>
            <person name="Paris A."/>
            <person name="Peixoto B.R."/>
            <person name="Pereira G.A.G."/>
            <person name="Pereira H.A. Jr."/>
            <person name="Pesquero J.B."/>
            <person name="Quaggio R.B."/>
            <person name="Roberto P.G."/>
            <person name="Rodrigues V."/>
            <person name="de Rosa A.J.M."/>
            <person name="de Rosa V.E. Jr."/>
            <person name="de Sa R.G."/>
            <person name="Santelli R.V."/>
            <person name="Sawasaki H.E."/>
            <person name="da Silva A.C.R."/>
            <person name="da Silva A.M."/>
            <person name="da Silva F.R."/>
            <person name="Silva W.A. Jr."/>
            <person name="da Silveira J.F."/>
            <person name="Silvestri M.L.Z."/>
            <person name="Siqueira W.J."/>
            <person name="de Souza A.A."/>
            <person name="de Souza A.P."/>
            <person name="Terenzi M.F."/>
            <person name="Truffi D."/>
            <person name="Tsai S.M."/>
            <person name="Tsuhako M.H."/>
            <person name="Vallada H."/>
            <person name="Van Sluys M.A."/>
            <person name="Verjovski-Almeida S."/>
            <person name="Vettore A.L."/>
            <person name="Zago M.A."/>
            <person name="Zatz M."/>
            <person name="Meidanis J."/>
            <person name="Setubal J.C."/>
        </authorList>
    </citation>
    <scope>NUCLEOTIDE SEQUENCE [LARGE SCALE GENOMIC DNA]</scope>
    <source>
        <strain>9a5c</strain>
    </source>
</reference>
<dbReference type="EC" id="2.7.7.72" evidence="1"/>
<dbReference type="EC" id="3.1.3.-" evidence="1"/>
<dbReference type="EC" id="3.1.4.-" evidence="1"/>
<dbReference type="EMBL" id="AE003849">
    <property type="protein sequence ID" value="AAF84171.1"/>
    <property type="molecule type" value="Genomic_DNA"/>
</dbReference>
<dbReference type="PIR" id="F82689">
    <property type="entry name" value="F82689"/>
</dbReference>
<dbReference type="RefSeq" id="WP_010893866.1">
    <property type="nucleotide sequence ID" value="NC_002488.3"/>
</dbReference>
<dbReference type="SMR" id="Q9PDL7"/>
<dbReference type="STRING" id="160492.XF_1362"/>
<dbReference type="KEGG" id="xfa:XF_1362"/>
<dbReference type="eggNOG" id="COG0617">
    <property type="taxonomic scope" value="Bacteria"/>
</dbReference>
<dbReference type="HOGENOM" id="CLU_015961_1_1_6"/>
<dbReference type="Proteomes" id="UP000000812">
    <property type="component" value="Chromosome"/>
</dbReference>
<dbReference type="GO" id="GO:0005524">
    <property type="term" value="F:ATP binding"/>
    <property type="evidence" value="ECO:0007669"/>
    <property type="project" value="UniProtKB-UniRule"/>
</dbReference>
<dbReference type="GO" id="GO:0004810">
    <property type="term" value="F:CCA tRNA nucleotidyltransferase activity"/>
    <property type="evidence" value="ECO:0007669"/>
    <property type="project" value="UniProtKB-UniRule"/>
</dbReference>
<dbReference type="GO" id="GO:0004112">
    <property type="term" value="F:cyclic-nucleotide phosphodiesterase activity"/>
    <property type="evidence" value="ECO:0007669"/>
    <property type="project" value="UniProtKB-UniRule"/>
</dbReference>
<dbReference type="GO" id="GO:0000287">
    <property type="term" value="F:magnesium ion binding"/>
    <property type="evidence" value="ECO:0007669"/>
    <property type="project" value="UniProtKB-UniRule"/>
</dbReference>
<dbReference type="GO" id="GO:0016791">
    <property type="term" value="F:phosphatase activity"/>
    <property type="evidence" value="ECO:0007669"/>
    <property type="project" value="UniProtKB-UniRule"/>
</dbReference>
<dbReference type="GO" id="GO:0000049">
    <property type="term" value="F:tRNA binding"/>
    <property type="evidence" value="ECO:0007669"/>
    <property type="project" value="UniProtKB-UniRule"/>
</dbReference>
<dbReference type="GO" id="GO:0042245">
    <property type="term" value="P:RNA repair"/>
    <property type="evidence" value="ECO:0007669"/>
    <property type="project" value="UniProtKB-KW"/>
</dbReference>
<dbReference type="GO" id="GO:0001680">
    <property type="term" value="P:tRNA 3'-terminal CCA addition"/>
    <property type="evidence" value="ECO:0007669"/>
    <property type="project" value="UniProtKB-UniRule"/>
</dbReference>
<dbReference type="CDD" id="cd05398">
    <property type="entry name" value="NT_ClassII-CCAase"/>
    <property type="match status" value="1"/>
</dbReference>
<dbReference type="Gene3D" id="3.30.460.10">
    <property type="entry name" value="Beta Polymerase, domain 2"/>
    <property type="match status" value="1"/>
</dbReference>
<dbReference type="Gene3D" id="1.10.3090.10">
    <property type="entry name" value="cca-adding enzyme, domain 2"/>
    <property type="match status" value="1"/>
</dbReference>
<dbReference type="HAMAP" id="MF_01261">
    <property type="entry name" value="CCA_bact_type1"/>
    <property type="match status" value="1"/>
</dbReference>
<dbReference type="InterPro" id="IPR012006">
    <property type="entry name" value="CCA_bact"/>
</dbReference>
<dbReference type="InterPro" id="IPR006674">
    <property type="entry name" value="HD_domain"/>
</dbReference>
<dbReference type="InterPro" id="IPR043519">
    <property type="entry name" value="NT_sf"/>
</dbReference>
<dbReference type="InterPro" id="IPR002646">
    <property type="entry name" value="PolA_pol_head_dom"/>
</dbReference>
<dbReference type="InterPro" id="IPR032828">
    <property type="entry name" value="PolyA_RNA-bd"/>
</dbReference>
<dbReference type="InterPro" id="IPR050124">
    <property type="entry name" value="tRNA_CCA-adding_enzyme"/>
</dbReference>
<dbReference type="NCBIfam" id="NF008137">
    <property type="entry name" value="PRK10885.1"/>
    <property type="match status" value="1"/>
</dbReference>
<dbReference type="PANTHER" id="PTHR47545">
    <property type="entry name" value="MULTIFUNCTIONAL CCA PROTEIN"/>
    <property type="match status" value="1"/>
</dbReference>
<dbReference type="PANTHER" id="PTHR47545:SF1">
    <property type="entry name" value="MULTIFUNCTIONAL CCA PROTEIN"/>
    <property type="match status" value="1"/>
</dbReference>
<dbReference type="Pfam" id="PF01743">
    <property type="entry name" value="PolyA_pol"/>
    <property type="match status" value="1"/>
</dbReference>
<dbReference type="Pfam" id="PF12627">
    <property type="entry name" value="PolyA_pol_RNAbd"/>
    <property type="match status" value="1"/>
</dbReference>
<dbReference type="PIRSF" id="PIRSF000813">
    <property type="entry name" value="CCA_bact"/>
    <property type="match status" value="1"/>
</dbReference>
<dbReference type="SUPFAM" id="SSF81301">
    <property type="entry name" value="Nucleotidyltransferase"/>
    <property type="match status" value="1"/>
</dbReference>
<dbReference type="SUPFAM" id="SSF81891">
    <property type="entry name" value="Poly A polymerase C-terminal region-like"/>
    <property type="match status" value="1"/>
</dbReference>
<dbReference type="PROSITE" id="PS51831">
    <property type="entry name" value="HD"/>
    <property type="match status" value="1"/>
</dbReference>
<feature type="chain" id="PRO_0000139009" description="Multifunctional CCA protein">
    <location>
        <begin position="1"/>
        <end position="416"/>
    </location>
</feature>
<feature type="domain" description="HD" evidence="1">
    <location>
        <begin position="229"/>
        <end position="331"/>
    </location>
</feature>
<feature type="binding site" evidence="1">
    <location>
        <position position="8"/>
    </location>
    <ligand>
        <name>ATP</name>
        <dbReference type="ChEBI" id="CHEBI:30616"/>
    </ligand>
</feature>
<feature type="binding site" evidence="1">
    <location>
        <position position="8"/>
    </location>
    <ligand>
        <name>CTP</name>
        <dbReference type="ChEBI" id="CHEBI:37563"/>
    </ligand>
</feature>
<feature type="binding site" evidence="1">
    <location>
        <position position="11"/>
    </location>
    <ligand>
        <name>ATP</name>
        <dbReference type="ChEBI" id="CHEBI:30616"/>
    </ligand>
</feature>
<feature type="binding site" evidence="1">
    <location>
        <position position="11"/>
    </location>
    <ligand>
        <name>CTP</name>
        <dbReference type="ChEBI" id="CHEBI:37563"/>
    </ligand>
</feature>
<feature type="binding site" evidence="1">
    <location>
        <position position="21"/>
    </location>
    <ligand>
        <name>Mg(2+)</name>
        <dbReference type="ChEBI" id="CHEBI:18420"/>
    </ligand>
</feature>
<feature type="binding site" evidence="1">
    <location>
        <position position="23"/>
    </location>
    <ligand>
        <name>Mg(2+)</name>
        <dbReference type="ChEBI" id="CHEBI:18420"/>
    </ligand>
</feature>
<feature type="binding site" evidence="1">
    <location>
        <position position="91"/>
    </location>
    <ligand>
        <name>ATP</name>
        <dbReference type="ChEBI" id="CHEBI:30616"/>
    </ligand>
</feature>
<feature type="binding site" evidence="1">
    <location>
        <position position="91"/>
    </location>
    <ligand>
        <name>CTP</name>
        <dbReference type="ChEBI" id="CHEBI:37563"/>
    </ligand>
</feature>
<feature type="binding site" evidence="1">
    <location>
        <position position="138"/>
    </location>
    <ligand>
        <name>ATP</name>
        <dbReference type="ChEBI" id="CHEBI:30616"/>
    </ligand>
</feature>
<feature type="binding site" evidence="1">
    <location>
        <position position="138"/>
    </location>
    <ligand>
        <name>CTP</name>
        <dbReference type="ChEBI" id="CHEBI:37563"/>
    </ligand>
</feature>
<feature type="binding site" evidence="1">
    <location>
        <position position="141"/>
    </location>
    <ligand>
        <name>ATP</name>
        <dbReference type="ChEBI" id="CHEBI:30616"/>
    </ligand>
</feature>
<feature type="binding site" evidence="1">
    <location>
        <position position="141"/>
    </location>
    <ligand>
        <name>CTP</name>
        <dbReference type="ChEBI" id="CHEBI:37563"/>
    </ligand>
</feature>
<evidence type="ECO:0000255" key="1">
    <source>
        <dbReference type="HAMAP-Rule" id="MF_01261"/>
    </source>
</evidence>